<accession>A1TVU7</accession>
<feature type="chain" id="PRO_1000009284" description="Leucine--tRNA ligase">
    <location>
        <begin position="1"/>
        <end position="897"/>
    </location>
</feature>
<feature type="short sequence motif" description="'HIGH' region">
    <location>
        <begin position="42"/>
        <end position="52"/>
    </location>
</feature>
<feature type="short sequence motif" description="'KMSKS' region">
    <location>
        <begin position="645"/>
        <end position="649"/>
    </location>
</feature>
<feature type="binding site" evidence="1">
    <location>
        <position position="648"/>
    </location>
    <ligand>
        <name>ATP</name>
        <dbReference type="ChEBI" id="CHEBI:30616"/>
    </ligand>
</feature>
<sequence>MQDKYTPAEVERAAHSHWTARDAYRVTEDAGKKKFYACSMLPYPSGKLHMGHVRNYTINDMLTRYLRMNGHNVLMPMGWDAFGLPAENAALKNGVPPAQWTYDNIAYMKKQMQAMGLAIDWSREVATCDPDYYKWNQWLFLKMLEKGIAYRKTQVVNWDPVDQTVLANEQVIDGRGWRTGALVEKREIPGYYLKITDYAQELLDHVQVGNPNATLTGWPDKVRLMQENWIGKSEGVRFAFTHDIRGEDGQPIGDGRMYVFTTRADTIMGVTFCAVAPEHPLAAHAARSNPDVAAFIQECKTGGTTEAELATQEKKGVRTGLTVTHPLTDEPIEVWVGNYVLMGYGDGAVMGVPAHDERDFAFALKYGIEIKQVVLVDGETFDYHRWQDWYGDKQNGVTINSDNFSGLSYQEAVSAVAHALQEKGLGEKKTTWRLRDWGVSRQRYWGTPIPIIHCDEHGAVPVPEKDLPVVLPQDCIPDGSGNPLHKHEGFHAGVKCPVCGKAARRETDTMDTFVDSSWYFMRYCDPKNADAMVAGGADYWMPMDQYIGGIEHAILHLLYARFWTKVMRDLGLVKVDEPFTKLLTQGMVLNHIYSRRTDKGGKEYFWPHDVEHIQDEAGKITGARLKNAVGDLPAGTPIDYEGVGTMSKSKNNGVDPQELIEKYGADTARLYTMFTAPPEATLEWNDAAVEGSYRFLRRVWNFGVKLAGIDAAATEAAIQGAQSLQDVQFGKEAKALRLEIHTVLKQVDYDYQRMQYNTVVSGAMKMLNALEDFKSADAPGGLVALIEGFGILLRVLYPATPHIAHGLWSGLGYAGSLGDLLDAPWPQVDAGALMQDEIELVLQINGKLRGAIRVPSGADKAEIERIALASEDFHKHAAGAAPKKVVVVPGRLVNVVV</sequence>
<keyword id="KW-0030">Aminoacyl-tRNA synthetase</keyword>
<keyword id="KW-0067">ATP-binding</keyword>
<keyword id="KW-0963">Cytoplasm</keyword>
<keyword id="KW-0436">Ligase</keyword>
<keyword id="KW-0547">Nucleotide-binding</keyword>
<keyword id="KW-0648">Protein biosynthesis</keyword>
<evidence type="ECO:0000255" key="1">
    <source>
        <dbReference type="HAMAP-Rule" id="MF_00049"/>
    </source>
</evidence>
<dbReference type="EC" id="6.1.1.4" evidence="1"/>
<dbReference type="EMBL" id="CP000512">
    <property type="protein sequence ID" value="ABM35085.1"/>
    <property type="molecule type" value="Genomic_DNA"/>
</dbReference>
<dbReference type="RefSeq" id="WP_011797553.1">
    <property type="nucleotide sequence ID" value="NC_008752.1"/>
</dbReference>
<dbReference type="SMR" id="A1TVU7"/>
<dbReference type="STRING" id="397945.Aave_4548"/>
<dbReference type="KEGG" id="aav:Aave_4548"/>
<dbReference type="eggNOG" id="COG0495">
    <property type="taxonomic scope" value="Bacteria"/>
</dbReference>
<dbReference type="HOGENOM" id="CLU_004427_0_0_4"/>
<dbReference type="OrthoDB" id="9810365at2"/>
<dbReference type="Proteomes" id="UP000002596">
    <property type="component" value="Chromosome"/>
</dbReference>
<dbReference type="GO" id="GO:0005829">
    <property type="term" value="C:cytosol"/>
    <property type="evidence" value="ECO:0007669"/>
    <property type="project" value="TreeGrafter"/>
</dbReference>
<dbReference type="GO" id="GO:0002161">
    <property type="term" value="F:aminoacyl-tRNA deacylase activity"/>
    <property type="evidence" value="ECO:0007669"/>
    <property type="project" value="InterPro"/>
</dbReference>
<dbReference type="GO" id="GO:0005524">
    <property type="term" value="F:ATP binding"/>
    <property type="evidence" value="ECO:0007669"/>
    <property type="project" value="UniProtKB-UniRule"/>
</dbReference>
<dbReference type="GO" id="GO:0004823">
    <property type="term" value="F:leucine-tRNA ligase activity"/>
    <property type="evidence" value="ECO:0007669"/>
    <property type="project" value="UniProtKB-UniRule"/>
</dbReference>
<dbReference type="GO" id="GO:0006429">
    <property type="term" value="P:leucyl-tRNA aminoacylation"/>
    <property type="evidence" value="ECO:0007669"/>
    <property type="project" value="UniProtKB-UniRule"/>
</dbReference>
<dbReference type="CDD" id="cd07958">
    <property type="entry name" value="Anticodon_Ia_Leu_BEm"/>
    <property type="match status" value="1"/>
</dbReference>
<dbReference type="CDD" id="cd00812">
    <property type="entry name" value="LeuRS_core"/>
    <property type="match status" value="1"/>
</dbReference>
<dbReference type="FunFam" id="1.10.730.10:FF:000002">
    <property type="entry name" value="Leucine--tRNA ligase"/>
    <property type="match status" value="1"/>
</dbReference>
<dbReference type="FunFam" id="3.40.50.620:FF:000003">
    <property type="entry name" value="Leucine--tRNA ligase"/>
    <property type="match status" value="1"/>
</dbReference>
<dbReference type="FunFam" id="3.40.50.620:FF:000056">
    <property type="entry name" value="Leucine--tRNA ligase"/>
    <property type="match status" value="1"/>
</dbReference>
<dbReference type="FunFam" id="3.90.740.10:FF:000012">
    <property type="entry name" value="Leucine--tRNA ligase"/>
    <property type="match status" value="1"/>
</dbReference>
<dbReference type="Gene3D" id="2.20.28.290">
    <property type="match status" value="1"/>
</dbReference>
<dbReference type="Gene3D" id="3.10.20.590">
    <property type="match status" value="1"/>
</dbReference>
<dbReference type="Gene3D" id="3.40.50.620">
    <property type="entry name" value="HUPs"/>
    <property type="match status" value="2"/>
</dbReference>
<dbReference type="Gene3D" id="1.10.730.10">
    <property type="entry name" value="Isoleucyl-tRNA Synthetase, Domain 1"/>
    <property type="match status" value="2"/>
</dbReference>
<dbReference type="HAMAP" id="MF_00049_B">
    <property type="entry name" value="Leu_tRNA_synth_B"/>
    <property type="match status" value="1"/>
</dbReference>
<dbReference type="InterPro" id="IPR001412">
    <property type="entry name" value="aa-tRNA-synth_I_CS"/>
</dbReference>
<dbReference type="InterPro" id="IPR002300">
    <property type="entry name" value="aa-tRNA-synth_Ia"/>
</dbReference>
<dbReference type="InterPro" id="IPR002302">
    <property type="entry name" value="Leu-tRNA-ligase"/>
</dbReference>
<dbReference type="InterPro" id="IPR025709">
    <property type="entry name" value="Leu_tRNA-synth_edit"/>
</dbReference>
<dbReference type="InterPro" id="IPR013155">
    <property type="entry name" value="M/V/L/I-tRNA-synth_anticd-bd"/>
</dbReference>
<dbReference type="InterPro" id="IPR015413">
    <property type="entry name" value="Methionyl/Leucyl_tRNA_Synth"/>
</dbReference>
<dbReference type="InterPro" id="IPR014729">
    <property type="entry name" value="Rossmann-like_a/b/a_fold"/>
</dbReference>
<dbReference type="InterPro" id="IPR009080">
    <property type="entry name" value="tRNAsynth_Ia_anticodon-bd"/>
</dbReference>
<dbReference type="InterPro" id="IPR009008">
    <property type="entry name" value="Val/Leu/Ile-tRNA-synth_edit"/>
</dbReference>
<dbReference type="NCBIfam" id="TIGR00396">
    <property type="entry name" value="leuS_bact"/>
    <property type="match status" value="1"/>
</dbReference>
<dbReference type="PANTHER" id="PTHR43740:SF2">
    <property type="entry name" value="LEUCINE--TRNA LIGASE, MITOCHONDRIAL"/>
    <property type="match status" value="1"/>
</dbReference>
<dbReference type="PANTHER" id="PTHR43740">
    <property type="entry name" value="LEUCYL-TRNA SYNTHETASE"/>
    <property type="match status" value="1"/>
</dbReference>
<dbReference type="Pfam" id="PF08264">
    <property type="entry name" value="Anticodon_1"/>
    <property type="match status" value="1"/>
</dbReference>
<dbReference type="Pfam" id="PF00133">
    <property type="entry name" value="tRNA-synt_1"/>
    <property type="match status" value="1"/>
</dbReference>
<dbReference type="Pfam" id="PF13603">
    <property type="entry name" value="tRNA-synt_1_2"/>
    <property type="match status" value="1"/>
</dbReference>
<dbReference type="Pfam" id="PF09334">
    <property type="entry name" value="tRNA-synt_1g"/>
    <property type="match status" value="1"/>
</dbReference>
<dbReference type="PRINTS" id="PR00985">
    <property type="entry name" value="TRNASYNTHLEU"/>
</dbReference>
<dbReference type="SUPFAM" id="SSF47323">
    <property type="entry name" value="Anticodon-binding domain of a subclass of class I aminoacyl-tRNA synthetases"/>
    <property type="match status" value="1"/>
</dbReference>
<dbReference type="SUPFAM" id="SSF52374">
    <property type="entry name" value="Nucleotidylyl transferase"/>
    <property type="match status" value="1"/>
</dbReference>
<dbReference type="SUPFAM" id="SSF50677">
    <property type="entry name" value="ValRS/IleRS/LeuRS editing domain"/>
    <property type="match status" value="1"/>
</dbReference>
<dbReference type="PROSITE" id="PS00178">
    <property type="entry name" value="AA_TRNA_LIGASE_I"/>
    <property type="match status" value="1"/>
</dbReference>
<name>SYL_PARC0</name>
<gene>
    <name evidence="1" type="primary">leuS</name>
    <name type="ordered locus">Aave_4548</name>
</gene>
<reference key="1">
    <citation type="submission" date="2006-12" db="EMBL/GenBank/DDBJ databases">
        <title>Complete sequence of Acidovorax avenae subsp. citrulli AAC00-1.</title>
        <authorList>
            <person name="Copeland A."/>
            <person name="Lucas S."/>
            <person name="Lapidus A."/>
            <person name="Barry K."/>
            <person name="Detter J.C."/>
            <person name="Glavina del Rio T."/>
            <person name="Dalin E."/>
            <person name="Tice H."/>
            <person name="Pitluck S."/>
            <person name="Kiss H."/>
            <person name="Brettin T."/>
            <person name="Bruce D."/>
            <person name="Han C."/>
            <person name="Tapia R."/>
            <person name="Gilna P."/>
            <person name="Schmutz J."/>
            <person name="Larimer F."/>
            <person name="Land M."/>
            <person name="Hauser L."/>
            <person name="Kyrpides N."/>
            <person name="Kim E."/>
            <person name="Stahl D."/>
            <person name="Richardson P."/>
        </authorList>
    </citation>
    <scope>NUCLEOTIDE SEQUENCE [LARGE SCALE GENOMIC DNA]</scope>
    <source>
        <strain>AAC00-1</strain>
    </source>
</reference>
<proteinExistence type="inferred from homology"/>
<comment type="catalytic activity">
    <reaction evidence="1">
        <text>tRNA(Leu) + L-leucine + ATP = L-leucyl-tRNA(Leu) + AMP + diphosphate</text>
        <dbReference type="Rhea" id="RHEA:11688"/>
        <dbReference type="Rhea" id="RHEA-COMP:9613"/>
        <dbReference type="Rhea" id="RHEA-COMP:9622"/>
        <dbReference type="ChEBI" id="CHEBI:30616"/>
        <dbReference type="ChEBI" id="CHEBI:33019"/>
        <dbReference type="ChEBI" id="CHEBI:57427"/>
        <dbReference type="ChEBI" id="CHEBI:78442"/>
        <dbReference type="ChEBI" id="CHEBI:78494"/>
        <dbReference type="ChEBI" id="CHEBI:456215"/>
        <dbReference type="EC" id="6.1.1.4"/>
    </reaction>
</comment>
<comment type="subcellular location">
    <subcellularLocation>
        <location evidence="1">Cytoplasm</location>
    </subcellularLocation>
</comment>
<comment type="similarity">
    <text evidence="1">Belongs to the class-I aminoacyl-tRNA synthetase family.</text>
</comment>
<organism>
    <name type="scientific">Paracidovorax citrulli (strain AAC00-1)</name>
    <name type="common">Acidovorax citrulli</name>
    <dbReference type="NCBI Taxonomy" id="397945"/>
    <lineage>
        <taxon>Bacteria</taxon>
        <taxon>Pseudomonadati</taxon>
        <taxon>Pseudomonadota</taxon>
        <taxon>Betaproteobacteria</taxon>
        <taxon>Burkholderiales</taxon>
        <taxon>Comamonadaceae</taxon>
        <taxon>Paracidovorax</taxon>
    </lineage>
</organism>
<protein>
    <recommendedName>
        <fullName evidence="1">Leucine--tRNA ligase</fullName>
        <ecNumber evidence="1">6.1.1.4</ecNumber>
    </recommendedName>
    <alternativeName>
        <fullName evidence="1">Leucyl-tRNA synthetase</fullName>
        <shortName evidence="1">LeuRS</shortName>
    </alternativeName>
</protein>